<feature type="chain" id="PRO_0000093545" description="Long neurotoxin 1" evidence="3">
    <location>
        <begin position="1"/>
        <end position="71"/>
    </location>
</feature>
<feature type="disulfide bond" evidence="1">
    <location>
        <begin position="3"/>
        <end position="21"/>
    </location>
</feature>
<feature type="disulfide bond" evidence="1">
    <location>
        <begin position="14"/>
        <end position="42"/>
    </location>
</feature>
<feature type="disulfide bond" evidence="1">
    <location>
        <begin position="27"/>
        <end position="31"/>
    </location>
</feature>
<feature type="disulfide bond" evidence="1">
    <location>
        <begin position="46"/>
        <end position="57"/>
    </location>
</feature>
<feature type="disulfide bond" evidence="1">
    <location>
        <begin position="58"/>
        <end position="63"/>
    </location>
</feature>
<dbReference type="PIR" id="A01654">
    <property type="entry name" value="N2NJ1W"/>
</dbReference>
<dbReference type="SMR" id="P01383"/>
<dbReference type="GO" id="GO:0005576">
    <property type="term" value="C:extracellular region"/>
    <property type="evidence" value="ECO:0007669"/>
    <property type="project" value="UniProtKB-SubCell"/>
</dbReference>
<dbReference type="GO" id="GO:0030550">
    <property type="term" value="F:acetylcholine receptor inhibitor activity"/>
    <property type="evidence" value="ECO:0007669"/>
    <property type="project" value="UniProtKB-KW"/>
</dbReference>
<dbReference type="GO" id="GO:0099106">
    <property type="term" value="F:ion channel regulator activity"/>
    <property type="evidence" value="ECO:0007669"/>
    <property type="project" value="UniProtKB-KW"/>
</dbReference>
<dbReference type="GO" id="GO:0090729">
    <property type="term" value="F:toxin activity"/>
    <property type="evidence" value="ECO:0007669"/>
    <property type="project" value="UniProtKB-KW"/>
</dbReference>
<dbReference type="CDD" id="cd00206">
    <property type="entry name" value="TFP_snake_toxin"/>
    <property type="match status" value="1"/>
</dbReference>
<dbReference type="Gene3D" id="2.10.60.10">
    <property type="entry name" value="CD59"/>
    <property type="match status" value="1"/>
</dbReference>
<dbReference type="InterPro" id="IPR003571">
    <property type="entry name" value="Snake_3FTx"/>
</dbReference>
<dbReference type="InterPro" id="IPR045860">
    <property type="entry name" value="Snake_toxin-like_sf"/>
</dbReference>
<dbReference type="InterPro" id="IPR018354">
    <property type="entry name" value="Snake_toxin_con_site"/>
</dbReference>
<dbReference type="InterPro" id="IPR054131">
    <property type="entry name" value="Toxin_cobra-type"/>
</dbReference>
<dbReference type="Pfam" id="PF21947">
    <property type="entry name" value="Toxin_cobra-type"/>
    <property type="match status" value="1"/>
</dbReference>
<dbReference type="SUPFAM" id="SSF57302">
    <property type="entry name" value="Snake toxin-like"/>
    <property type="match status" value="1"/>
</dbReference>
<dbReference type="PROSITE" id="PS00272">
    <property type="entry name" value="SNAKE_TOXIN"/>
    <property type="match status" value="1"/>
</dbReference>
<organism>
    <name type="scientific">Naja melanoleuca</name>
    <name type="common">Forest cobra</name>
    <name type="synonym">Black-lipped cobra</name>
    <dbReference type="NCBI Taxonomy" id="8643"/>
    <lineage>
        <taxon>Eukaryota</taxon>
        <taxon>Metazoa</taxon>
        <taxon>Chordata</taxon>
        <taxon>Craniata</taxon>
        <taxon>Vertebrata</taxon>
        <taxon>Euteleostomi</taxon>
        <taxon>Lepidosauria</taxon>
        <taxon>Squamata</taxon>
        <taxon>Bifurcata</taxon>
        <taxon>Unidentata</taxon>
        <taxon>Episquamata</taxon>
        <taxon>Toxicofera</taxon>
        <taxon>Serpentes</taxon>
        <taxon>Colubroidea</taxon>
        <taxon>Elapidae</taxon>
        <taxon>Elapinae</taxon>
        <taxon>Naja</taxon>
    </lineage>
</organism>
<accession>P01383</accession>
<reference key="1">
    <citation type="journal article" date="1974" name="Eur. J. Biochem.">
        <title>The separation of neurotoxin from the venom of Naja melanoleuca and the primary sequence determination.</title>
        <authorList>
            <person name="Shipolini R.A."/>
            <person name="Bailey G.S."/>
            <person name="Banks B.E.C."/>
        </authorList>
    </citation>
    <scope>PROTEIN SEQUENCE</scope>
    <scope>TOXIC DOSE</scope>
    <scope>SUBCELLULAR LOCATION</scope>
    <source>
        <tissue>Venom</tissue>
    </source>
</reference>
<proteinExistence type="evidence at protein level"/>
<keyword id="KW-0008">Acetylcholine receptor inhibiting toxin</keyword>
<keyword id="KW-0903">Direct protein sequencing</keyword>
<keyword id="KW-1015">Disulfide bond</keyword>
<keyword id="KW-0872">Ion channel impairing toxin</keyword>
<keyword id="KW-0528">Neurotoxin</keyword>
<keyword id="KW-0629">Postsynaptic neurotoxin</keyword>
<keyword id="KW-0964">Secreted</keyword>
<keyword id="KW-0800">Toxin</keyword>
<evidence type="ECO:0000250" key="1">
    <source>
        <dbReference type="UniProtKB" id="P25671"/>
    </source>
</evidence>
<evidence type="ECO:0000250" key="2">
    <source>
        <dbReference type="UniProtKB" id="P60615"/>
    </source>
</evidence>
<evidence type="ECO:0000269" key="3">
    <source>
    </source>
</evidence>
<evidence type="ECO:0000303" key="4">
    <source>
    </source>
</evidence>
<evidence type="ECO:0000305" key="5"/>
<protein>
    <recommendedName>
        <fullName>Long neurotoxin 1</fullName>
    </recommendedName>
    <alternativeName>
        <fullName evidence="4">Neurotoxin 3.9.4</fullName>
    </alternativeName>
</protein>
<sequence>KRCYRTPDLKSQTCPPGEDLCYTKKWCADWCTSRGKVIELGCVATCPKVKPYEQITCCSTDNCNPHPKMKP</sequence>
<comment type="function">
    <text evidence="2">Binds with high affinity to muscular (alpha-1/CHRNA1) and neuronal (alpha-7/CHRNA7) nicotinic acetylcholine receptor (nAChR) and inhibits acetylcholine from binding to the receptor, thereby impairing neuromuscular and neuronal transmission.</text>
</comment>
<comment type="subcellular location">
    <subcellularLocation>
        <location evidence="3">Secreted</location>
    </subcellularLocation>
</comment>
<comment type="tissue specificity">
    <text evidence="5">Expressed by the venom gland.</text>
</comment>
<comment type="toxic dose">
    <text evidence="3">LD(50) is 1.5 mg/kg by intraperitoneal injection into mice.</text>
</comment>
<comment type="similarity">
    <text evidence="5">Belongs to the three-finger toxin family. Long-chain subfamily. Type II alpha-neurotoxin sub-subfamily.</text>
</comment>
<name>3L21_NAJME</name>